<feature type="signal peptide" evidence="1">
    <location>
        <begin position="1"/>
        <end position="19"/>
    </location>
</feature>
<feature type="propeptide" id="PRO_0000006775" evidence="1">
    <location>
        <begin position="20"/>
        <end position="64"/>
    </location>
</feature>
<feature type="peptide" id="PRO_0000006776" description="Neutrophil defensin 1">
    <location>
        <begin position="65"/>
        <end position="94"/>
    </location>
</feature>
<feature type="modified residue" description="ADP-ribosylarginine; by ART1" evidence="1">
    <location>
        <position position="78"/>
    </location>
</feature>
<feature type="modified residue" description="Phosphotyrosine" evidence="2">
    <location>
        <position position="85"/>
    </location>
</feature>
<feature type="modified residue" description="ADP-ribosylarginine; by ART1" evidence="1">
    <location>
        <position position="88"/>
    </location>
</feature>
<feature type="disulfide bond" evidence="1">
    <location>
        <begin position="66"/>
        <end position="94"/>
    </location>
</feature>
<feature type="disulfide bond" evidence="1">
    <location>
        <begin position="68"/>
        <end position="83"/>
    </location>
</feature>
<feature type="disulfide bond" evidence="1">
    <location>
        <begin position="73"/>
        <end position="93"/>
    </location>
</feature>
<protein>
    <recommendedName>
        <fullName>Neutrophil defensin 1</fullName>
    </recommendedName>
    <alternativeName>
        <fullName>Defensin, alpha 1</fullName>
    </alternativeName>
</protein>
<comment type="function">
    <text evidence="2">Effector molecule of the innate immune system that acts via antibiotic-like properties against a broad array of infectious agents including bacteria, fungi, and viruses or by promoting the activation and maturation of some APCs. Interacts with the essential precursor of cell wall synthesis lipid II to inhibit bacterial cell wall synthesis. Inhibits adenovirus infection via inhibition of viral disassembly at the vertex region, thereby restricting the release of internal capsid protein pVI, which is required for endosomal membrane penetration during cell entry. In addition, interaction with adenovirus capsid leads to the redirection of viral particles to TLR4 thereby promoting a NLRP3-mediated inflammasome response and interleukin 1-beta (IL-1beta) release. Induces the production of proinflammatory cytokines including type I interferon (IFN) in plasmacytoid dendritic cells (pDCs) by triggering the degradation of NFKBIA and nuclear translocation of IRF1, both of which are required for activation of pDCs.</text>
</comment>
<comment type="subunit">
    <text evidence="2">Tetramer. Dimer. Interacts with RETN.</text>
</comment>
<comment type="subcellular location">
    <subcellularLocation>
        <location>Secreted</location>
    </subcellularLocation>
</comment>
<comment type="PTM">
    <text evidence="2">ADP-ribosylation drastically reduces cytotoxic and antibacterial activities, and enhances IL8 production.</text>
</comment>
<comment type="similarity">
    <text evidence="3">Belongs to the alpha-defensin family.</text>
</comment>
<organism>
    <name type="scientific">Pan troglodytes</name>
    <name type="common">Chimpanzee</name>
    <dbReference type="NCBI Taxonomy" id="9598"/>
    <lineage>
        <taxon>Eukaryota</taxon>
        <taxon>Metazoa</taxon>
        <taxon>Chordata</taxon>
        <taxon>Craniata</taxon>
        <taxon>Vertebrata</taxon>
        <taxon>Euteleostomi</taxon>
        <taxon>Mammalia</taxon>
        <taxon>Eutheria</taxon>
        <taxon>Euarchontoglires</taxon>
        <taxon>Primates</taxon>
        <taxon>Haplorrhini</taxon>
        <taxon>Catarrhini</taxon>
        <taxon>Hominidae</taxon>
        <taxon>Pan</taxon>
    </lineage>
</organism>
<dbReference type="EMBL" id="AY746437">
    <property type="protein sequence ID" value="AAW78340.1"/>
    <property type="molecule type" value="mRNA"/>
</dbReference>
<dbReference type="SMR" id="Q5G863"/>
<dbReference type="FunCoup" id="Q5G863">
    <property type="interactions" value="425"/>
</dbReference>
<dbReference type="STRING" id="9598.ENSPTRP00000079419"/>
<dbReference type="Ensembl" id="ENSPTRT00000084879.1">
    <property type="protein sequence ID" value="ENSPTRP00000079419.1"/>
    <property type="gene ID" value="ENSPTRG00000050573.1"/>
</dbReference>
<dbReference type="GeneTree" id="ENSGT00940000153268"/>
<dbReference type="InParanoid" id="Q5G863"/>
<dbReference type="OMA" id="LRKNMAC"/>
<dbReference type="Proteomes" id="UP000002277">
    <property type="component" value="Unplaced"/>
</dbReference>
<dbReference type="Bgee" id="ENSPTRG00000050573">
    <property type="expression patterns" value="Expressed in bone marrow and 14 other cell types or tissues"/>
</dbReference>
<dbReference type="GO" id="GO:0005615">
    <property type="term" value="C:extracellular space"/>
    <property type="evidence" value="ECO:0000318"/>
    <property type="project" value="GO_Central"/>
</dbReference>
<dbReference type="GO" id="GO:0005796">
    <property type="term" value="C:Golgi lumen"/>
    <property type="evidence" value="ECO:0007669"/>
    <property type="project" value="UniProtKB-ARBA"/>
</dbReference>
<dbReference type="GO" id="GO:0019731">
    <property type="term" value="P:antibacterial humoral response"/>
    <property type="evidence" value="ECO:0000318"/>
    <property type="project" value="GO_Central"/>
</dbReference>
<dbReference type="GO" id="GO:0061844">
    <property type="term" value="P:antimicrobial humoral immune response mediated by antimicrobial peptide"/>
    <property type="evidence" value="ECO:0000318"/>
    <property type="project" value="GO_Central"/>
</dbReference>
<dbReference type="GO" id="GO:0071222">
    <property type="term" value="P:cellular response to lipopolysaccharide"/>
    <property type="evidence" value="ECO:0000318"/>
    <property type="project" value="GO_Central"/>
</dbReference>
<dbReference type="GO" id="GO:0050832">
    <property type="term" value="P:defense response to fungus"/>
    <property type="evidence" value="ECO:0007669"/>
    <property type="project" value="UniProtKB-KW"/>
</dbReference>
<dbReference type="GO" id="GO:0050829">
    <property type="term" value="P:defense response to Gram-negative bacterium"/>
    <property type="evidence" value="ECO:0000318"/>
    <property type="project" value="GO_Central"/>
</dbReference>
<dbReference type="GO" id="GO:0050830">
    <property type="term" value="P:defense response to Gram-positive bacterium"/>
    <property type="evidence" value="ECO:0000318"/>
    <property type="project" value="GO_Central"/>
</dbReference>
<dbReference type="GO" id="GO:0051607">
    <property type="term" value="P:defense response to virus"/>
    <property type="evidence" value="ECO:0007669"/>
    <property type="project" value="UniProtKB-KW"/>
</dbReference>
<dbReference type="GO" id="GO:0051673">
    <property type="term" value="P:disruption of plasma membrane integrity in another organism"/>
    <property type="evidence" value="ECO:0000318"/>
    <property type="project" value="GO_Central"/>
</dbReference>
<dbReference type="GO" id="GO:0002227">
    <property type="term" value="P:innate immune response in mucosa"/>
    <property type="evidence" value="ECO:0000318"/>
    <property type="project" value="GO_Central"/>
</dbReference>
<dbReference type="GO" id="GO:0031640">
    <property type="term" value="P:killing of cells of another organism"/>
    <property type="evidence" value="ECO:0007669"/>
    <property type="project" value="UniProtKB-KW"/>
</dbReference>
<dbReference type="InterPro" id="IPR016327">
    <property type="entry name" value="Alpha-defensin"/>
</dbReference>
<dbReference type="InterPro" id="IPR006081">
    <property type="entry name" value="Alpha-defensin_C"/>
</dbReference>
<dbReference type="InterPro" id="IPR002366">
    <property type="entry name" value="Alpha-defensin_N"/>
</dbReference>
<dbReference type="InterPro" id="IPR006080">
    <property type="entry name" value="Beta/alpha-defensin_C"/>
</dbReference>
<dbReference type="PANTHER" id="PTHR11876">
    <property type="entry name" value="ALPHA-DEFENSIN 1"/>
    <property type="match status" value="1"/>
</dbReference>
<dbReference type="PANTHER" id="PTHR11876:SF19">
    <property type="entry name" value="NEUTROPHIL DEFENSIN 1-RELATED"/>
    <property type="match status" value="1"/>
</dbReference>
<dbReference type="Pfam" id="PF00323">
    <property type="entry name" value="Defensin_1"/>
    <property type="match status" value="1"/>
</dbReference>
<dbReference type="Pfam" id="PF00879">
    <property type="entry name" value="Defensin_propep"/>
    <property type="match status" value="1"/>
</dbReference>
<dbReference type="PIRSF" id="PIRSF001875">
    <property type="entry name" value="Alpha-defensin"/>
    <property type="match status" value="1"/>
</dbReference>
<dbReference type="SMART" id="SM01418">
    <property type="entry name" value="Defensin_propep"/>
    <property type="match status" value="1"/>
</dbReference>
<dbReference type="SMART" id="SM00048">
    <property type="entry name" value="DEFSN"/>
    <property type="match status" value="1"/>
</dbReference>
<dbReference type="SUPFAM" id="SSF57392">
    <property type="entry name" value="Defensin-like"/>
    <property type="match status" value="1"/>
</dbReference>
<dbReference type="PROSITE" id="PS00269">
    <property type="entry name" value="DEFENSIN"/>
    <property type="match status" value="1"/>
</dbReference>
<accession>Q5G863</accession>
<sequence>MRTLAILAAILLVALQAQAEPLQARADEVAAAPEQIPADNPEVVVSLAWDESLAPKHPGSRKNVACYCRIPACLAGERRYGTCIYQGRLWAFCC</sequence>
<evidence type="ECO:0000250" key="1"/>
<evidence type="ECO:0000250" key="2">
    <source>
        <dbReference type="UniProtKB" id="P59665"/>
    </source>
</evidence>
<evidence type="ECO:0000305" key="3"/>
<name>DEF1_PANTR</name>
<reference key="1">
    <citation type="journal article" date="2004" name="Physiol. Genomics">
        <title>Rapid evolution and diversification of mammalian alpha-defensins as revealed by comparative analysis of rodent and primate genes.</title>
        <authorList>
            <person name="Patil A."/>
            <person name="Hughes A.L."/>
            <person name="Zhang G."/>
        </authorList>
    </citation>
    <scope>NUCLEOTIDE SEQUENCE [MRNA]</scope>
</reference>
<keyword id="KW-0013">ADP-ribosylation</keyword>
<keyword id="KW-0044">Antibiotic</keyword>
<keyword id="KW-0929">Antimicrobial</keyword>
<keyword id="KW-0051">Antiviral defense</keyword>
<keyword id="KW-0211">Defensin</keyword>
<keyword id="KW-1015">Disulfide bond</keyword>
<keyword id="KW-0295">Fungicide</keyword>
<keyword id="KW-0597">Phosphoprotein</keyword>
<keyword id="KW-1185">Reference proteome</keyword>
<keyword id="KW-0964">Secreted</keyword>
<keyword id="KW-0732">Signal</keyword>
<proteinExistence type="inferred from homology"/>
<gene>
    <name type="primary">DEFA1</name>
</gene>